<dbReference type="EC" id="3.1.3.23"/>
<dbReference type="EMBL" id="L10328">
    <property type="protein sequence ID" value="AAA62048.1"/>
    <property type="molecule type" value="Genomic_DNA"/>
</dbReference>
<dbReference type="EMBL" id="U00096">
    <property type="protein sequence ID" value="AAC76720.1"/>
    <property type="molecule type" value="Genomic_DNA"/>
</dbReference>
<dbReference type="EMBL" id="AP009048">
    <property type="protein sequence ID" value="BAE77597.1"/>
    <property type="molecule type" value="Genomic_DNA"/>
</dbReference>
<dbReference type="EMBL" id="X04341">
    <property type="protein sequence ID" value="CAA27873.1"/>
    <property type="molecule type" value="Genomic_DNA"/>
</dbReference>
<dbReference type="PIR" id="B65172">
    <property type="entry name" value="QQECGB"/>
</dbReference>
<dbReference type="RefSeq" id="NP_418152.1">
    <property type="nucleotide sequence ID" value="NC_000913.3"/>
</dbReference>
<dbReference type="RefSeq" id="WP_000985549.1">
    <property type="nucleotide sequence ID" value="NZ_STEB01000015.1"/>
</dbReference>
<dbReference type="PDB" id="1RKQ">
    <property type="method" value="X-ray"/>
    <property type="resolution" value="1.40 A"/>
    <property type="chains" value="A/B=2-270"/>
</dbReference>
<dbReference type="PDBsum" id="1RKQ"/>
<dbReference type="SMR" id="P0A8Y5"/>
<dbReference type="BioGRID" id="4262577">
    <property type="interactions" value="42"/>
</dbReference>
<dbReference type="BioGRID" id="852509">
    <property type="interactions" value="1"/>
</dbReference>
<dbReference type="DIP" id="DIP-36033N"/>
<dbReference type="FunCoup" id="P0A8Y5">
    <property type="interactions" value="261"/>
</dbReference>
<dbReference type="IntAct" id="P0A8Y5">
    <property type="interactions" value="11"/>
</dbReference>
<dbReference type="STRING" id="511145.b3697"/>
<dbReference type="jPOST" id="P0A8Y5"/>
<dbReference type="PaxDb" id="511145-b3697"/>
<dbReference type="DNASU" id="948204"/>
<dbReference type="EnsemblBacteria" id="AAC76720">
    <property type="protein sequence ID" value="AAC76720"/>
    <property type="gene ID" value="b3697"/>
</dbReference>
<dbReference type="GeneID" id="93778438"/>
<dbReference type="GeneID" id="948204"/>
<dbReference type="KEGG" id="ecj:JW3674"/>
<dbReference type="KEGG" id="eco:b3697"/>
<dbReference type="KEGG" id="ecoc:C3026_20040"/>
<dbReference type="PATRIC" id="fig|1411691.4.peg.3006"/>
<dbReference type="EchoBASE" id="EB1181"/>
<dbReference type="eggNOG" id="COG0561">
    <property type="taxonomic scope" value="Bacteria"/>
</dbReference>
<dbReference type="HOGENOM" id="CLU_044146_0_1_6"/>
<dbReference type="InParanoid" id="P0A8Y5"/>
<dbReference type="OMA" id="GAWIQDP"/>
<dbReference type="OrthoDB" id="9781413at2"/>
<dbReference type="PhylomeDB" id="P0A8Y5"/>
<dbReference type="BioCyc" id="EcoCyc:EG11195-MONOMER"/>
<dbReference type="BioCyc" id="MetaCyc:EG11195-MONOMER"/>
<dbReference type="EvolutionaryTrace" id="P0A8Y5"/>
<dbReference type="PRO" id="PR:P0A8Y5"/>
<dbReference type="Proteomes" id="UP000000625">
    <property type="component" value="Chromosome"/>
</dbReference>
<dbReference type="GO" id="GO:0005829">
    <property type="term" value="C:cytosol"/>
    <property type="evidence" value="ECO:0000314"/>
    <property type="project" value="EcoCyc"/>
</dbReference>
<dbReference type="GO" id="GO:0000287">
    <property type="term" value="F:magnesium ion binding"/>
    <property type="evidence" value="ECO:0000314"/>
    <property type="project" value="EcoliWiki"/>
</dbReference>
<dbReference type="GO" id="GO:0016791">
    <property type="term" value="F:phosphatase activity"/>
    <property type="evidence" value="ECO:0000314"/>
    <property type="project" value="EcoliWiki"/>
</dbReference>
<dbReference type="GO" id="GO:0050308">
    <property type="term" value="F:sugar-phosphatase activity"/>
    <property type="evidence" value="ECO:0000314"/>
    <property type="project" value="EcoliWiki"/>
</dbReference>
<dbReference type="CDD" id="cd07516">
    <property type="entry name" value="HAD_Pase"/>
    <property type="match status" value="1"/>
</dbReference>
<dbReference type="FunFam" id="3.30.1240.10:FF:000001">
    <property type="entry name" value="Sugar phosphatase YidA"/>
    <property type="match status" value="1"/>
</dbReference>
<dbReference type="Gene3D" id="3.30.1240.10">
    <property type="match status" value="1"/>
</dbReference>
<dbReference type="Gene3D" id="3.40.50.1000">
    <property type="entry name" value="HAD superfamily/HAD-like"/>
    <property type="match status" value="1"/>
</dbReference>
<dbReference type="InterPro" id="IPR000150">
    <property type="entry name" value="Cof"/>
</dbReference>
<dbReference type="InterPro" id="IPR036412">
    <property type="entry name" value="HAD-like_sf"/>
</dbReference>
<dbReference type="InterPro" id="IPR006379">
    <property type="entry name" value="HAD-SF_hydro_IIB"/>
</dbReference>
<dbReference type="InterPro" id="IPR023214">
    <property type="entry name" value="HAD_sf"/>
</dbReference>
<dbReference type="NCBIfam" id="TIGR00099">
    <property type="entry name" value="Cof-subfamily"/>
    <property type="match status" value="1"/>
</dbReference>
<dbReference type="NCBIfam" id="TIGR01484">
    <property type="entry name" value="HAD-SF-IIB"/>
    <property type="match status" value="1"/>
</dbReference>
<dbReference type="NCBIfam" id="NF007806">
    <property type="entry name" value="PRK10513.1"/>
    <property type="match status" value="1"/>
</dbReference>
<dbReference type="PANTHER" id="PTHR10000:SF8">
    <property type="entry name" value="HAD SUPERFAMILY HYDROLASE-LIKE, TYPE 3"/>
    <property type="match status" value="1"/>
</dbReference>
<dbReference type="PANTHER" id="PTHR10000">
    <property type="entry name" value="PHOSPHOSERINE PHOSPHATASE"/>
    <property type="match status" value="1"/>
</dbReference>
<dbReference type="Pfam" id="PF08282">
    <property type="entry name" value="Hydrolase_3"/>
    <property type="match status" value="1"/>
</dbReference>
<dbReference type="SFLD" id="SFLDG01144">
    <property type="entry name" value="C2.B.4:_PGP_Like"/>
    <property type="match status" value="1"/>
</dbReference>
<dbReference type="SFLD" id="SFLDG01140">
    <property type="entry name" value="C2.B:_Phosphomannomutase_and_P"/>
    <property type="match status" value="1"/>
</dbReference>
<dbReference type="SUPFAM" id="SSF56784">
    <property type="entry name" value="HAD-like"/>
    <property type="match status" value="1"/>
</dbReference>
<dbReference type="PROSITE" id="PS01228">
    <property type="entry name" value="COF_1"/>
    <property type="match status" value="1"/>
</dbReference>
<dbReference type="PROSITE" id="PS01229">
    <property type="entry name" value="COF_2"/>
    <property type="match status" value="1"/>
</dbReference>
<name>YIDA_ECOLI</name>
<protein>
    <recommendedName>
        <fullName>Sugar phosphatase YidA</fullName>
        <ecNumber>3.1.3.23</ecNumber>
    </recommendedName>
</protein>
<evidence type="ECO:0000250" key="1"/>
<evidence type="ECO:0000269" key="2">
    <source>
    </source>
</evidence>
<evidence type="ECO:0000269" key="3">
    <source>
    </source>
</evidence>
<evidence type="ECO:0000269" key="4">
    <source ref="7"/>
</evidence>
<evidence type="ECO:0000305" key="5"/>
<evidence type="ECO:0007829" key="6">
    <source>
        <dbReference type="PDB" id="1RKQ"/>
    </source>
</evidence>
<comment type="function">
    <text evidence="2 3">Catalyzes the dephosphorylation of different sugar phosphates including erythrose-4-phosphate (Ery4P), ribose-5-phosphate (Ribu5P), fructose-1-phosphate (Fru1P), fructose-6-phosphate (Fru6P), glucose-6-P (Glu6P), and also imidodiphosphate (Imido-di-P) and acetyl phosphate (Acetyl-P). Selectively hydrolyzes alpha-D-glucose-1-phosphate (Glu1P) and has no activity with the beta form.</text>
</comment>
<comment type="catalytic activity">
    <reaction evidence="3">
        <text>sugar phosphate + H2O = sugar + phosphate.</text>
        <dbReference type="EC" id="3.1.3.23"/>
    </reaction>
</comment>
<comment type="cofactor">
    <cofactor evidence="3">
        <name>Mg(2+)</name>
        <dbReference type="ChEBI" id="CHEBI:18420"/>
    </cofactor>
    <cofactor evidence="3">
        <name>Mn(2+)</name>
        <dbReference type="ChEBI" id="CHEBI:29035"/>
    </cofactor>
    <cofactor evidence="3">
        <name>Co(2+)</name>
        <dbReference type="ChEBI" id="CHEBI:48828"/>
    </cofactor>
    <cofactor evidence="3">
        <name>Zn(2+)</name>
        <dbReference type="ChEBI" id="CHEBI:29105"/>
    </cofactor>
    <text evidence="3">Magnesium. Can also use other divalent metal cations as manganese, cobalt or zinc.</text>
</comment>
<comment type="biophysicochemical properties">
    <kinetics>
        <KM evidence="3">0.019 mM for Ery4P (in the presence of magnesium ion as cofactor and at pH 9)</KM>
        <KM evidence="3">0.033 mM for Imido-di-P (in the presence of magnesium ion as cofactor and at pH 9)</KM>
        <KM evidence="3">0.21 mM for Glu1P (in the presence of magnesium ion as cofactor and at pH 9)</KM>
        <KM evidence="3">0.39 mM for Fru1P (in the presence of magnesium ion as cofactor and at pH 9)</KM>
        <KM evidence="3">0.44 mM for Fru6P (in the presence of magnesium ion as cofactor and at pH 9)</KM>
        <KM evidence="3">0.45 mM for Ribu5P (in the presence of magnesium ion as cofactor and at pH 9)</KM>
        <KM evidence="3">0.54 mM for Man1P (in the presence of magnesium ion as cofactor and at pH 9)</KM>
        <KM evidence="3">0.81 mM for Glu6P (in the presence of magnesium ion as cofactor and at pH 9)</KM>
        <KM evidence="3">3.8 mM for Acetyl-P (in the presence of magnesium ion as cofactor and at pH 9)</KM>
    </kinetics>
    <phDependence>
        <text evidence="3">Optimum pH is between 6 and 7.5.</text>
    </phDependence>
</comment>
<comment type="subunit">
    <text evidence="4">Homodimer.</text>
</comment>
<comment type="similarity">
    <text evidence="5">Belongs to the HAD-like hydrolase superfamily. Cof family.</text>
</comment>
<proteinExistence type="evidence at protein level"/>
<reference key="1">
    <citation type="journal article" date="1993" name="Genomics">
        <title>DNA sequence and analysis of 136 kilobases of the Escherichia coli genome: organizational symmetry around the origin of replication.</title>
        <authorList>
            <person name="Burland V.D."/>
            <person name="Plunkett G. III"/>
            <person name="Daniels D.L."/>
            <person name="Blattner F.R."/>
        </authorList>
    </citation>
    <scope>NUCLEOTIDE SEQUENCE [LARGE SCALE GENOMIC DNA]</scope>
    <source>
        <strain>K12 / MG1655 / ATCC 47076</strain>
    </source>
</reference>
<reference key="2">
    <citation type="journal article" date="1997" name="Science">
        <title>The complete genome sequence of Escherichia coli K-12.</title>
        <authorList>
            <person name="Blattner F.R."/>
            <person name="Plunkett G. III"/>
            <person name="Bloch C.A."/>
            <person name="Perna N.T."/>
            <person name="Burland V."/>
            <person name="Riley M."/>
            <person name="Collado-Vides J."/>
            <person name="Glasner J.D."/>
            <person name="Rode C.K."/>
            <person name="Mayhew G.F."/>
            <person name="Gregor J."/>
            <person name="Davis N.W."/>
            <person name="Kirkpatrick H.A."/>
            <person name="Goeden M.A."/>
            <person name="Rose D.J."/>
            <person name="Mau B."/>
            <person name="Shao Y."/>
        </authorList>
    </citation>
    <scope>NUCLEOTIDE SEQUENCE [LARGE SCALE GENOMIC DNA]</scope>
    <source>
        <strain>K12 / MG1655 / ATCC 47076</strain>
    </source>
</reference>
<reference key="3">
    <citation type="journal article" date="2006" name="Mol. Syst. Biol.">
        <title>Highly accurate genome sequences of Escherichia coli K-12 strains MG1655 and W3110.</title>
        <authorList>
            <person name="Hayashi K."/>
            <person name="Morooka N."/>
            <person name="Yamamoto Y."/>
            <person name="Fujita K."/>
            <person name="Isono K."/>
            <person name="Choi S."/>
            <person name="Ohtsubo E."/>
            <person name="Baba T."/>
            <person name="Wanner B.L."/>
            <person name="Mori H."/>
            <person name="Horiuchi T."/>
        </authorList>
    </citation>
    <scope>NUCLEOTIDE SEQUENCE [LARGE SCALE GENOMIC DNA]</scope>
    <source>
        <strain>K12 / W3110 / ATCC 27325 / DSM 5911</strain>
    </source>
</reference>
<reference key="4">
    <citation type="journal article" date="1987" name="Nucleic Acids Res.">
        <title>DNA sequence of the E. coli gyrB gene: application of a new sequencing strategy.</title>
        <authorList>
            <person name="Adachi T."/>
            <person name="Mizuuchi M."/>
            <person name="Robinson E.A."/>
            <person name="Appella E."/>
            <person name="O'Dea M.H."/>
            <person name="Gellert M."/>
            <person name="Mizuuchi K."/>
        </authorList>
    </citation>
    <scope>NUCLEOTIDE SEQUENCE [GENOMIC DNA] OF 1-195</scope>
</reference>
<reference key="5">
    <citation type="journal article" date="2005" name="FEMS Microbiol. Rev.">
        <title>Enzyme genomics: application of general enzymatic screens to discover new enzymes.</title>
        <authorList>
            <person name="Kuznetsova E."/>
            <person name="Proudfoot M."/>
            <person name="Sanders S.A."/>
            <person name="Reinking J."/>
            <person name="Savchenko A."/>
            <person name="Arrowsmith C.H."/>
            <person name="Edwards A.M."/>
            <person name="Yakunin A.F."/>
        </authorList>
    </citation>
    <scope>FUNCTION AS A PHOSPHATASE</scope>
</reference>
<reference key="6">
    <citation type="journal article" date="2006" name="J. Biol. Chem.">
        <title>Genome-wide analysis of substrate specificities of the Escherichia coli haloacid dehalogenase-like phosphatase family.</title>
        <authorList>
            <person name="Kuznetsova E."/>
            <person name="Proudfoot M."/>
            <person name="Gonzalez C.F."/>
            <person name="Brown G."/>
            <person name="Omelchenko M.V."/>
            <person name="Borozan I."/>
            <person name="Carmel L."/>
            <person name="Wolf Y.I."/>
            <person name="Mori H."/>
            <person name="Savchenko A.V."/>
            <person name="Arrowsmith C.H."/>
            <person name="Koonin E.V."/>
            <person name="Edwards A.M."/>
            <person name="Yakunin A.F."/>
        </authorList>
    </citation>
    <scope>FUNCTION AS A PHOSPHATASE</scope>
    <scope>CATALYTIC ACTIVITY</scope>
    <scope>ACTIVE SITE</scope>
    <scope>MUTAGENESIS OF ASP-9</scope>
    <scope>BIOPHYSICOCHEMICAL PROPERTIES</scope>
    <scope>SUBSTRATE SPECIFICITY</scope>
    <scope>COFACTOR</scope>
</reference>
<reference key="7">
    <citation type="submission" date="2004-03" db="PDB data bank">
        <title>Crystal structure of NYSGRC target T1436: a hypothetical protein YidA.</title>
        <authorList>
            <person name="Ramagopal U.A."/>
            <person name="Almo S.C."/>
        </authorList>
    </citation>
    <scope>X-RAY CRYSTALLOGRAPHY (1.4 ANGSTROMS) OF 2-270 IN COMPLEX WITH MAGNESIUM IONS</scope>
    <scope>SUBUNIT</scope>
</reference>
<feature type="chain" id="PRO_0000054423" description="Sugar phosphatase YidA">
    <location>
        <begin position="1"/>
        <end position="270"/>
    </location>
</feature>
<feature type="active site" description="Nucleophile" evidence="3">
    <location>
        <position position="9"/>
    </location>
</feature>
<feature type="binding site">
    <location>
        <position position="9"/>
    </location>
    <ligand>
        <name>Mg(2+)</name>
        <dbReference type="ChEBI" id="CHEBI:18420"/>
    </ligand>
</feature>
<feature type="binding site" evidence="1">
    <location>
        <position position="10"/>
    </location>
    <ligand>
        <name>phosphate</name>
        <dbReference type="ChEBI" id="CHEBI:43474"/>
    </ligand>
</feature>
<feature type="binding site">
    <location>
        <position position="11"/>
    </location>
    <ligand>
        <name>Mg(2+)</name>
        <dbReference type="ChEBI" id="CHEBI:18420"/>
    </ligand>
</feature>
<feature type="binding site" evidence="1">
    <location>
        <begin position="43"/>
        <end position="44"/>
    </location>
    <ligand>
        <name>phosphate</name>
        <dbReference type="ChEBI" id="CHEBI:43474"/>
    </ligand>
</feature>
<feature type="binding site" evidence="1">
    <location>
        <position position="197"/>
    </location>
    <ligand>
        <name>phosphate</name>
        <dbReference type="ChEBI" id="CHEBI:43474"/>
    </ligand>
</feature>
<feature type="binding site">
    <location>
        <position position="220"/>
    </location>
    <ligand>
        <name>Mg(2+)</name>
        <dbReference type="ChEBI" id="CHEBI:18420"/>
    </ligand>
</feature>
<feature type="binding site" evidence="1">
    <location>
        <position position="223"/>
    </location>
    <ligand>
        <name>phosphate</name>
        <dbReference type="ChEBI" id="CHEBI:43474"/>
    </ligand>
</feature>
<feature type="mutagenesis site" description="Loss of the phosphatase activity." evidence="3">
    <original>D</original>
    <variation>A</variation>
    <location>
        <position position="9"/>
    </location>
</feature>
<feature type="strand" evidence="6">
    <location>
        <begin position="5"/>
        <end position="8"/>
    </location>
</feature>
<feature type="helix" evidence="6">
    <location>
        <begin position="10"/>
        <end position="14"/>
    </location>
</feature>
<feature type="helix" evidence="6">
    <location>
        <begin position="23"/>
        <end position="34"/>
    </location>
</feature>
<feature type="strand" evidence="6">
    <location>
        <begin position="38"/>
        <end position="42"/>
    </location>
</feature>
<feature type="helix" evidence="6">
    <location>
        <begin position="47"/>
        <end position="49"/>
    </location>
</feature>
<feature type="helix" evidence="6">
    <location>
        <begin position="51"/>
        <end position="56"/>
    </location>
</feature>
<feature type="strand" evidence="6">
    <location>
        <begin position="65"/>
        <end position="68"/>
    </location>
</feature>
<feature type="helix" evidence="6">
    <location>
        <begin position="69"/>
        <end position="71"/>
    </location>
</feature>
<feature type="strand" evidence="6">
    <location>
        <begin position="73"/>
        <end position="76"/>
    </location>
</feature>
<feature type="turn" evidence="6">
    <location>
        <begin position="77"/>
        <end position="79"/>
    </location>
</feature>
<feature type="strand" evidence="6">
    <location>
        <begin position="82"/>
        <end position="85"/>
    </location>
</feature>
<feature type="helix" evidence="6">
    <location>
        <begin position="90"/>
        <end position="103"/>
    </location>
</feature>
<feature type="strand" evidence="6">
    <location>
        <begin position="106"/>
        <end position="110"/>
    </location>
</feature>
<feature type="strand" evidence="6">
    <location>
        <begin position="115"/>
        <end position="117"/>
    </location>
</feature>
<feature type="helix" evidence="6">
    <location>
        <begin position="124"/>
        <end position="132"/>
    </location>
</feature>
<feature type="strand" evidence="6">
    <location>
        <begin position="137"/>
        <end position="139"/>
    </location>
</feature>
<feature type="helix" evidence="6">
    <location>
        <begin position="142"/>
        <end position="144"/>
    </location>
</feature>
<feature type="strand" evidence="6">
    <location>
        <begin position="153"/>
        <end position="157"/>
    </location>
</feature>
<feature type="helix" evidence="6">
    <location>
        <begin position="160"/>
        <end position="169"/>
    </location>
</feature>
<feature type="helix" evidence="6">
    <location>
        <begin position="172"/>
        <end position="177"/>
    </location>
</feature>
<feature type="strand" evidence="6">
    <location>
        <begin position="178"/>
        <end position="184"/>
    </location>
</feature>
<feature type="strand" evidence="6">
    <location>
        <begin position="187"/>
        <end position="192"/>
    </location>
</feature>
<feature type="helix" evidence="6">
    <location>
        <begin position="197"/>
        <end position="208"/>
    </location>
</feature>
<feature type="helix" evidence="6">
    <location>
        <begin position="212"/>
        <end position="214"/>
    </location>
</feature>
<feature type="strand" evidence="6">
    <location>
        <begin position="215"/>
        <end position="219"/>
    </location>
</feature>
<feature type="helix" evidence="6">
    <location>
        <begin position="222"/>
        <end position="224"/>
    </location>
</feature>
<feature type="helix" evidence="6">
    <location>
        <begin position="225"/>
        <end position="230"/>
    </location>
</feature>
<feature type="strand" evidence="6">
    <location>
        <begin position="231"/>
        <end position="236"/>
    </location>
</feature>
<feature type="helix" evidence="6">
    <location>
        <begin position="242"/>
        <end position="247"/>
    </location>
</feature>
<feature type="strand" evidence="6">
    <location>
        <begin position="249"/>
        <end position="251"/>
    </location>
</feature>
<feature type="turn" evidence="6">
    <location>
        <begin position="255"/>
        <end position="258"/>
    </location>
</feature>
<feature type="helix" evidence="6">
    <location>
        <begin position="259"/>
        <end position="267"/>
    </location>
</feature>
<keyword id="KW-0002">3D-structure</keyword>
<keyword id="KW-0378">Hydrolase</keyword>
<keyword id="KW-0460">Magnesium</keyword>
<keyword id="KW-0479">Metal-binding</keyword>
<keyword id="KW-1185">Reference proteome</keyword>
<organism>
    <name type="scientific">Escherichia coli (strain K12)</name>
    <dbReference type="NCBI Taxonomy" id="83333"/>
    <lineage>
        <taxon>Bacteria</taxon>
        <taxon>Pseudomonadati</taxon>
        <taxon>Pseudomonadota</taxon>
        <taxon>Gammaproteobacteria</taxon>
        <taxon>Enterobacterales</taxon>
        <taxon>Enterobacteriaceae</taxon>
        <taxon>Escherichia</taxon>
    </lineage>
</organism>
<sequence length="270" mass="29721">MAIKLIAIDMDGTLLLPDHTISPAVKNAIAAARARGVNVVLTTGRPYAGVHNYLKELHMEQPGDYCITYNGALVQKAADGSTVAQTALSYDDYRFLEKLSREVGSHFHALDRTTLYTANRDISYYTVHESFVATIPLVFCEAEKMDPNTQFLKVMMIDEPAILDQAIARIPQEVKEKYTVLKSAPYFLEILDKRVNKGTGVKSLADVLGIKPEEIMAIGDQENDIAMIEYAGVGVAMDNAIPSVKEVANFVTKSNLEDGVAFAIEKYVLN</sequence>
<gene>
    <name type="primary">yidA</name>
    <name type="ordered locus">b3697</name>
    <name type="ordered locus">JW3674</name>
</gene>
<accession>P0A8Y5</accession>
<accession>P09997</accession>
<accession>P76737</accession>
<accession>Q2M809</accession>